<gene>
    <name evidence="1" type="primary">recA</name>
    <name type="ordered locus">Rleg2_1958</name>
</gene>
<accession>B5ZRG2</accession>
<feature type="chain" id="PRO_1000114358" description="Protein RecA">
    <location>
        <begin position="1"/>
        <end position="362"/>
    </location>
</feature>
<feature type="binding site" evidence="1">
    <location>
        <begin position="77"/>
        <end position="84"/>
    </location>
    <ligand>
        <name>ATP</name>
        <dbReference type="ChEBI" id="CHEBI:30616"/>
    </ligand>
</feature>
<keyword id="KW-0067">ATP-binding</keyword>
<keyword id="KW-0963">Cytoplasm</keyword>
<keyword id="KW-0227">DNA damage</keyword>
<keyword id="KW-0233">DNA recombination</keyword>
<keyword id="KW-0234">DNA repair</keyword>
<keyword id="KW-0238">DNA-binding</keyword>
<keyword id="KW-0547">Nucleotide-binding</keyword>
<keyword id="KW-1185">Reference proteome</keyword>
<keyword id="KW-0742">SOS response</keyword>
<proteinExistence type="inferred from homology"/>
<reference key="1">
    <citation type="journal article" date="2010" name="Stand. Genomic Sci.">
        <title>Complete genome sequence of Rhizobium leguminosarum bv trifolii strain WSM2304, an effective microsymbiont of the South American clover Trifolium polymorphum.</title>
        <authorList>
            <person name="Reeve W."/>
            <person name="O'Hara G."/>
            <person name="Chain P."/>
            <person name="Ardley J."/>
            <person name="Brau L."/>
            <person name="Nandesena K."/>
            <person name="Tiwari R."/>
            <person name="Malfatti S."/>
            <person name="Kiss H."/>
            <person name="Lapidus A."/>
            <person name="Copeland A."/>
            <person name="Nolan M."/>
            <person name="Land M."/>
            <person name="Ivanova N."/>
            <person name="Mavromatis K."/>
            <person name="Markowitz V."/>
            <person name="Kyrpides N."/>
            <person name="Melino V."/>
            <person name="Denton M."/>
            <person name="Yates R."/>
            <person name="Howieson J."/>
        </authorList>
    </citation>
    <scope>NUCLEOTIDE SEQUENCE [LARGE SCALE GENOMIC DNA]</scope>
    <source>
        <strain>WSM2304</strain>
    </source>
</reference>
<sequence length="362" mass="38894">MSQNSLRLVEDKSVDKSKALEAALSQIERSFGKGSIMKLGSNENVVEIETISTGSLGLDIALGVGGLPRGRIIEIYGPESSGKTTLALQTIAEAQKKGGICAFVDAEHALDPVYARKLGVDLQNLLISQPDTGEQALEITDTLVRSGAVDVLVVDSVAALTPRAEIEGEMGDSLPGLQARLMSQALRKLTASISKSNTMVIFINQIRMKIGVMFGSPETTTGGNALKFYASVRLDIRRIGAVKEREEVIGNQTRVKVVKNKMAPPFKQVEFDIMYGEGVSKTGELVDLGVKAGIVEKSGAWFSYNSQRLGQGRENAKTFLRDNPDLAREIELSLRQNAGLIADRFLQNGGPDPDDGDAAAEM</sequence>
<comment type="function">
    <text evidence="1">Can catalyze the hydrolysis of ATP in the presence of single-stranded DNA, the ATP-dependent uptake of single-stranded DNA by duplex DNA, and the ATP-dependent hybridization of homologous single-stranded DNAs. It interacts with LexA causing its activation and leading to its autocatalytic cleavage.</text>
</comment>
<comment type="subcellular location">
    <subcellularLocation>
        <location evidence="1">Cytoplasm</location>
    </subcellularLocation>
</comment>
<comment type="similarity">
    <text evidence="1">Belongs to the RecA family.</text>
</comment>
<name>RECA_RHILW</name>
<dbReference type="EMBL" id="CP001191">
    <property type="protein sequence ID" value="ACI55243.1"/>
    <property type="molecule type" value="Genomic_DNA"/>
</dbReference>
<dbReference type="RefSeq" id="WP_003586201.1">
    <property type="nucleotide sequence ID" value="NC_011369.1"/>
</dbReference>
<dbReference type="SMR" id="B5ZRG2"/>
<dbReference type="STRING" id="395492.Rleg2_1958"/>
<dbReference type="KEGG" id="rlt:Rleg2_1958"/>
<dbReference type="eggNOG" id="COG0468">
    <property type="taxonomic scope" value="Bacteria"/>
</dbReference>
<dbReference type="HOGENOM" id="CLU_040469_1_2_5"/>
<dbReference type="Proteomes" id="UP000008330">
    <property type="component" value="Chromosome"/>
</dbReference>
<dbReference type="GO" id="GO:0005829">
    <property type="term" value="C:cytosol"/>
    <property type="evidence" value="ECO:0007669"/>
    <property type="project" value="TreeGrafter"/>
</dbReference>
<dbReference type="GO" id="GO:0005524">
    <property type="term" value="F:ATP binding"/>
    <property type="evidence" value="ECO:0007669"/>
    <property type="project" value="UniProtKB-UniRule"/>
</dbReference>
<dbReference type="GO" id="GO:0016887">
    <property type="term" value="F:ATP hydrolysis activity"/>
    <property type="evidence" value="ECO:0007669"/>
    <property type="project" value="InterPro"/>
</dbReference>
<dbReference type="GO" id="GO:0140664">
    <property type="term" value="F:ATP-dependent DNA damage sensor activity"/>
    <property type="evidence" value="ECO:0007669"/>
    <property type="project" value="InterPro"/>
</dbReference>
<dbReference type="GO" id="GO:0003684">
    <property type="term" value="F:damaged DNA binding"/>
    <property type="evidence" value="ECO:0007669"/>
    <property type="project" value="UniProtKB-UniRule"/>
</dbReference>
<dbReference type="GO" id="GO:0003697">
    <property type="term" value="F:single-stranded DNA binding"/>
    <property type="evidence" value="ECO:0007669"/>
    <property type="project" value="UniProtKB-UniRule"/>
</dbReference>
<dbReference type="GO" id="GO:0006310">
    <property type="term" value="P:DNA recombination"/>
    <property type="evidence" value="ECO:0007669"/>
    <property type="project" value="UniProtKB-UniRule"/>
</dbReference>
<dbReference type="GO" id="GO:0006281">
    <property type="term" value="P:DNA repair"/>
    <property type="evidence" value="ECO:0007669"/>
    <property type="project" value="UniProtKB-UniRule"/>
</dbReference>
<dbReference type="GO" id="GO:0009432">
    <property type="term" value="P:SOS response"/>
    <property type="evidence" value="ECO:0007669"/>
    <property type="project" value="UniProtKB-UniRule"/>
</dbReference>
<dbReference type="CDD" id="cd00983">
    <property type="entry name" value="RecA"/>
    <property type="match status" value="1"/>
</dbReference>
<dbReference type="FunFam" id="3.40.50.300:FF:000087">
    <property type="entry name" value="Recombinase RecA"/>
    <property type="match status" value="1"/>
</dbReference>
<dbReference type="Gene3D" id="3.40.50.300">
    <property type="entry name" value="P-loop containing nucleotide triphosphate hydrolases"/>
    <property type="match status" value="1"/>
</dbReference>
<dbReference type="HAMAP" id="MF_00268">
    <property type="entry name" value="RecA"/>
    <property type="match status" value="1"/>
</dbReference>
<dbReference type="InterPro" id="IPR003593">
    <property type="entry name" value="AAA+_ATPase"/>
</dbReference>
<dbReference type="InterPro" id="IPR013765">
    <property type="entry name" value="DNA_recomb/repair_RecA"/>
</dbReference>
<dbReference type="InterPro" id="IPR020584">
    <property type="entry name" value="DNA_recomb/repair_RecA_CS"/>
</dbReference>
<dbReference type="InterPro" id="IPR027417">
    <property type="entry name" value="P-loop_NTPase"/>
</dbReference>
<dbReference type="InterPro" id="IPR049261">
    <property type="entry name" value="RecA-like_C"/>
</dbReference>
<dbReference type="InterPro" id="IPR049428">
    <property type="entry name" value="RecA-like_N"/>
</dbReference>
<dbReference type="InterPro" id="IPR020588">
    <property type="entry name" value="RecA_ATP-bd"/>
</dbReference>
<dbReference type="InterPro" id="IPR023400">
    <property type="entry name" value="RecA_C_sf"/>
</dbReference>
<dbReference type="InterPro" id="IPR020587">
    <property type="entry name" value="RecA_monomer-monomer_interface"/>
</dbReference>
<dbReference type="NCBIfam" id="TIGR02012">
    <property type="entry name" value="tigrfam_recA"/>
    <property type="match status" value="1"/>
</dbReference>
<dbReference type="PANTHER" id="PTHR45900:SF1">
    <property type="entry name" value="MITOCHONDRIAL DNA REPAIR PROTEIN RECA HOMOLOG-RELATED"/>
    <property type="match status" value="1"/>
</dbReference>
<dbReference type="PANTHER" id="PTHR45900">
    <property type="entry name" value="RECA"/>
    <property type="match status" value="1"/>
</dbReference>
<dbReference type="Pfam" id="PF00154">
    <property type="entry name" value="RecA"/>
    <property type="match status" value="1"/>
</dbReference>
<dbReference type="Pfam" id="PF21096">
    <property type="entry name" value="RecA_C"/>
    <property type="match status" value="1"/>
</dbReference>
<dbReference type="PRINTS" id="PR00142">
    <property type="entry name" value="RECA"/>
</dbReference>
<dbReference type="SMART" id="SM00382">
    <property type="entry name" value="AAA"/>
    <property type="match status" value="1"/>
</dbReference>
<dbReference type="SUPFAM" id="SSF52540">
    <property type="entry name" value="P-loop containing nucleoside triphosphate hydrolases"/>
    <property type="match status" value="1"/>
</dbReference>
<dbReference type="SUPFAM" id="SSF54752">
    <property type="entry name" value="RecA protein, C-terminal domain"/>
    <property type="match status" value="1"/>
</dbReference>
<dbReference type="PROSITE" id="PS00321">
    <property type="entry name" value="RECA_1"/>
    <property type="match status" value="1"/>
</dbReference>
<dbReference type="PROSITE" id="PS50162">
    <property type="entry name" value="RECA_2"/>
    <property type="match status" value="1"/>
</dbReference>
<dbReference type="PROSITE" id="PS50163">
    <property type="entry name" value="RECA_3"/>
    <property type="match status" value="1"/>
</dbReference>
<protein>
    <recommendedName>
        <fullName evidence="1">Protein RecA</fullName>
    </recommendedName>
    <alternativeName>
        <fullName evidence="1">Recombinase A</fullName>
    </alternativeName>
</protein>
<organism>
    <name type="scientific">Rhizobium leguminosarum bv. trifolii (strain WSM2304)</name>
    <dbReference type="NCBI Taxonomy" id="395492"/>
    <lineage>
        <taxon>Bacteria</taxon>
        <taxon>Pseudomonadati</taxon>
        <taxon>Pseudomonadota</taxon>
        <taxon>Alphaproteobacteria</taxon>
        <taxon>Hyphomicrobiales</taxon>
        <taxon>Rhizobiaceae</taxon>
        <taxon>Rhizobium/Agrobacterium group</taxon>
        <taxon>Rhizobium</taxon>
    </lineage>
</organism>
<evidence type="ECO:0000255" key="1">
    <source>
        <dbReference type="HAMAP-Rule" id="MF_00268"/>
    </source>
</evidence>